<reference key="1">
    <citation type="submission" date="2008-06" db="EMBL/GenBank/DDBJ databases">
        <title>Complete sequence of Chlorobium phaeobacteroides BS1.</title>
        <authorList>
            <consortium name="US DOE Joint Genome Institute"/>
            <person name="Lucas S."/>
            <person name="Copeland A."/>
            <person name="Lapidus A."/>
            <person name="Glavina del Rio T."/>
            <person name="Dalin E."/>
            <person name="Tice H."/>
            <person name="Bruce D."/>
            <person name="Goodwin L."/>
            <person name="Pitluck S."/>
            <person name="Schmutz J."/>
            <person name="Larimer F."/>
            <person name="Land M."/>
            <person name="Hauser L."/>
            <person name="Kyrpides N."/>
            <person name="Ovchinnikova G."/>
            <person name="Li T."/>
            <person name="Liu Z."/>
            <person name="Zhao F."/>
            <person name="Overmann J."/>
            <person name="Bryant D.A."/>
            <person name="Richardson P."/>
        </authorList>
    </citation>
    <scope>NUCLEOTIDE SEQUENCE [LARGE SCALE GENOMIC DNA]</scope>
    <source>
        <strain>BS1</strain>
    </source>
</reference>
<organism>
    <name type="scientific">Chlorobium phaeobacteroides (strain BS1)</name>
    <dbReference type="NCBI Taxonomy" id="331678"/>
    <lineage>
        <taxon>Bacteria</taxon>
        <taxon>Pseudomonadati</taxon>
        <taxon>Chlorobiota</taxon>
        <taxon>Chlorobiia</taxon>
        <taxon>Chlorobiales</taxon>
        <taxon>Chlorobiaceae</taxon>
        <taxon>Chlorobium/Pelodictyon group</taxon>
        <taxon>Chlorobium</taxon>
    </lineage>
</organism>
<evidence type="ECO:0000255" key="1">
    <source>
        <dbReference type="HAMAP-Rule" id="MF_00487"/>
    </source>
</evidence>
<gene>
    <name evidence="1" type="primary">mdh</name>
    <name type="ordered locus">Cphamn1_0832</name>
</gene>
<accession>B3EP06</accession>
<name>MDH_CHLPB</name>
<comment type="function">
    <text evidence="1">Catalyzes the reversible oxidation of malate to oxaloacetate.</text>
</comment>
<comment type="catalytic activity">
    <reaction evidence="1">
        <text>(S)-malate + NAD(+) = oxaloacetate + NADH + H(+)</text>
        <dbReference type="Rhea" id="RHEA:21432"/>
        <dbReference type="ChEBI" id="CHEBI:15378"/>
        <dbReference type="ChEBI" id="CHEBI:15589"/>
        <dbReference type="ChEBI" id="CHEBI:16452"/>
        <dbReference type="ChEBI" id="CHEBI:57540"/>
        <dbReference type="ChEBI" id="CHEBI:57945"/>
        <dbReference type="EC" id="1.1.1.37"/>
    </reaction>
</comment>
<comment type="similarity">
    <text evidence="1">Belongs to the LDH/MDH superfamily. MDH type 3 family.</text>
</comment>
<keyword id="KW-0520">NAD</keyword>
<keyword id="KW-0560">Oxidoreductase</keyword>
<keyword id="KW-0816">Tricarboxylic acid cycle</keyword>
<dbReference type="EC" id="1.1.1.37" evidence="1"/>
<dbReference type="EMBL" id="CP001101">
    <property type="protein sequence ID" value="ACE03783.1"/>
    <property type="molecule type" value="Genomic_DNA"/>
</dbReference>
<dbReference type="SMR" id="B3EP06"/>
<dbReference type="STRING" id="331678.Cphamn1_0832"/>
<dbReference type="KEGG" id="cpb:Cphamn1_0832"/>
<dbReference type="eggNOG" id="COG0039">
    <property type="taxonomic scope" value="Bacteria"/>
</dbReference>
<dbReference type="HOGENOM" id="CLU_045401_2_1_10"/>
<dbReference type="OrthoDB" id="9802969at2"/>
<dbReference type="GO" id="GO:0004459">
    <property type="term" value="F:L-lactate dehydrogenase activity"/>
    <property type="evidence" value="ECO:0007669"/>
    <property type="project" value="TreeGrafter"/>
</dbReference>
<dbReference type="GO" id="GO:0030060">
    <property type="term" value="F:L-malate dehydrogenase (NAD+) activity"/>
    <property type="evidence" value="ECO:0007669"/>
    <property type="project" value="UniProtKB-UniRule"/>
</dbReference>
<dbReference type="GO" id="GO:0006089">
    <property type="term" value="P:lactate metabolic process"/>
    <property type="evidence" value="ECO:0007669"/>
    <property type="project" value="TreeGrafter"/>
</dbReference>
<dbReference type="GO" id="GO:0006099">
    <property type="term" value="P:tricarboxylic acid cycle"/>
    <property type="evidence" value="ECO:0007669"/>
    <property type="project" value="UniProtKB-UniRule"/>
</dbReference>
<dbReference type="CDD" id="cd01339">
    <property type="entry name" value="LDH-like_MDH"/>
    <property type="match status" value="1"/>
</dbReference>
<dbReference type="FunFam" id="3.40.50.720:FF:000018">
    <property type="entry name" value="Malate dehydrogenase"/>
    <property type="match status" value="1"/>
</dbReference>
<dbReference type="FunFam" id="3.90.110.10:FF:000004">
    <property type="entry name" value="Malate dehydrogenase"/>
    <property type="match status" value="1"/>
</dbReference>
<dbReference type="Gene3D" id="3.90.110.10">
    <property type="entry name" value="Lactate dehydrogenase/glycoside hydrolase, family 4, C-terminal"/>
    <property type="match status" value="1"/>
</dbReference>
<dbReference type="Gene3D" id="3.40.50.720">
    <property type="entry name" value="NAD(P)-binding Rossmann-like Domain"/>
    <property type="match status" value="1"/>
</dbReference>
<dbReference type="HAMAP" id="MF_00487">
    <property type="entry name" value="Malate_dehydrog_3"/>
    <property type="match status" value="1"/>
</dbReference>
<dbReference type="InterPro" id="IPR001557">
    <property type="entry name" value="L-lactate/malate_DH"/>
</dbReference>
<dbReference type="InterPro" id="IPR022383">
    <property type="entry name" value="Lactate/malate_DH_C"/>
</dbReference>
<dbReference type="InterPro" id="IPR001236">
    <property type="entry name" value="Lactate/malate_DH_N"/>
</dbReference>
<dbReference type="InterPro" id="IPR015955">
    <property type="entry name" value="Lactate_DH/Glyco_Ohase_4_C"/>
</dbReference>
<dbReference type="InterPro" id="IPR011275">
    <property type="entry name" value="Malate_DH_type3"/>
</dbReference>
<dbReference type="InterPro" id="IPR036291">
    <property type="entry name" value="NAD(P)-bd_dom_sf"/>
</dbReference>
<dbReference type="NCBIfam" id="TIGR01763">
    <property type="entry name" value="MalateDH_bact"/>
    <property type="match status" value="1"/>
</dbReference>
<dbReference type="NCBIfam" id="NF004863">
    <property type="entry name" value="PRK06223.1"/>
    <property type="match status" value="1"/>
</dbReference>
<dbReference type="PANTHER" id="PTHR43128">
    <property type="entry name" value="L-2-HYDROXYCARBOXYLATE DEHYDROGENASE (NAD(P)(+))"/>
    <property type="match status" value="1"/>
</dbReference>
<dbReference type="PANTHER" id="PTHR43128:SF16">
    <property type="entry name" value="L-LACTATE DEHYDROGENASE"/>
    <property type="match status" value="1"/>
</dbReference>
<dbReference type="Pfam" id="PF02866">
    <property type="entry name" value="Ldh_1_C"/>
    <property type="match status" value="1"/>
</dbReference>
<dbReference type="Pfam" id="PF00056">
    <property type="entry name" value="Ldh_1_N"/>
    <property type="match status" value="1"/>
</dbReference>
<dbReference type="PIRSF" id="PIRSF000102">
    <property type="entry name" value="Lac_mal_DH"/>
    <property type="match status" value="1"/>
</dbReference>
<dbReference type="PRINTS" id="PR00086">
    <property type="entry name" value="LLDHDRGNASE"/>
</dbReference>
<dbReference type="SUPFAM" id="SSF56327">
    <property type="entry name" value="LDH C-terminal domain-like"/>
    <property type="match status" value="1"/>
</dbReference>
<dbReference type="SUPFAM" id="SSF51735">
    <property type="entry name" value="NAD(P)-binding Rossmann-fold domains"/>
    <property type="match status" value="1"/>
</dbReference>
<proteinExistence type="inferred from homology"/>
<protein>
    <recommendedName>
        <fullName evidence="1">Malate dehydrogenase</fullName>
        <ecNumber evidence="1">1.1.1.37</ecNumber>
    </recommendedName>
</protein>
<sequence length="310" mass="33495">MKITVIGAGHVGATAAHRIAEQQLANTVVLFDILEGIPQGKALDMYESGPVGLFDTKVYGTTDYNDTADSDIILITAGMARKPGMSREDLLMKNATIVKEVTDQVVRFSKNPIIIMVSNPLDIMTHVGYIRSKLPKERVLGMAGVLDSARFRSFIAEELNVSMRDINAFVLGGHGDSMVPVVKYTSVAGIPLTELMAQDTIEQLVDRTRKGGAEIVNYLKNGSAYYAPASSAVEMIDAIVNDRKRILPCSALLEGQYGINNVYIGAPVKLGKNGIEQILEIDLDAPELDALRKSAAIVEENCNNLASLLA</sequence>
<feature type="chain" id="PRO_1000126129" description="Malate dehydrogenase">
    <location>
        <begin position="1"/>
        <end position="310"/>
    </location>
</feature>
<feature type="active site" description="Proton acceptor" evidence="1">
    <location>
        <position position="174"/>
    </location>
</feature>
<feature type="binding site" evidence="1">
    <location>
        <begin position="7"/>
        <end position="12"/>
    </location>
    <ligand>
        <name>NAD(+)</name>
        <dbReference type="ChEBI" id="CHEBI:57540"/>
    </ligand>
</feature>
<feature type="binding site" evidence="1">
    <location>
        <position position="32"/>
    </location>
    <ligand>
        <name>NAD(+)</name>
        <dbReference type="ChEBI" id="CHEBI:57540"/>
    </ligand>
</feature>
<feature type="binding site" evidence="1">
    <location>
        <position position="81"/>
    </location>
    <ligand>
        <name>substrate</name>
    </ligand>
</feature>
<feature type="binding site" evidence="1">
    <location>
        <position position="87"/>
    </location>
    <ligand>
        <name>substrate</name>
    </ligand>
</feature>
<feature type="binding site" evidence="1">
    <location>
        <position position="94"/>
    </location>
    <ligand>
        <name>NAD(+)</name>
        <dbReference type="ChEBI" id="CHEBI:57540"/>
    </ligand>
</feature>
<feature type="binding site" evidence="1">
    <location>
        <begin position="117"/>
        <end position="119"/>
    </location>
    <ligand>
        <name>NAD(+)</name>
        <dbReference type="ChEBI" id="CHEBI:57540"/>
    </ligand>
</feature>
<feature type="binding site" evidence="1">
    <location>
        <position position="119"/>
    </location>
    <ligand>
        <name>substrate</name>
    </ligand>
</feature>
<feature type="binding site" evidence="1">
    <location>
        <position position="150"/>
    </location>
    <ligand>
        <name>substrate</name>
    </ligand>
</feature>